<evidence type="ECO:0000250" key="1"/>
<evidence type="ECO:0000250" key="2">
    <source>
        <dbReference type="UniProtKB" id="P14324"/>
    </source>
</evidence>
<evidence type="ECO:0000250" key="3">
    <source>
        <dbReference type="UniProtKB" id="Q12051"/>
    </source>
</evidence>
<evidence type="ECO:0000255" key="4"/>
<evidence type="ECO:0000269" key="5">
    <source>
    </source>
</evidence>
<evidence type="ECO:0000269" key="6">
    <source>
    </source>
</evidence>
<evidence type="ECO:0000269" key="7">
    <source>
    </source>
</evidence>
<evidence type="ECO:0000305" key="8"/>
<protein>
    <recommendedName>
        <fullName>Heterodimeric geranylgeranyl pyrophosphate synthase small subunit, chloroplastic</fullName>
    </recommendedName>
</protein>
<dbReference type="EMBL" id="L40577">
    <property type="protein sequence ID" value="AAA81879.1"/>
    <property type="molecule type" value="mRNA"/>
</dbReference>
<dbReference type="EMBL" id="AL035540">
    <property type="protein sequence ID" value="CAB37502.1"/>
    <property type="molecule type" value="Genomic_DNA"/>
</dbReference>
<dbReference type="EMBL" id="AL161593">
    <property type="protein sequence ID" value="CAB80510.1"/>
    <property type="molecule type" value="Genomic_DNA"/>
</dbReference>
<dbReference type="EMBL" id="CP002687">
    <property type="protein sequence ID" value="AEE86930.1"/>
    <property type="molecule type" value="Genomic_DNA"/>
</dbReference>
<dbReference type="EMBL" id="AY057734">
    <property type="protein sequence ID" value="AAL15364.1"/>
    <property type="molecule type" value="mRNA"/>
</dbReference>
<dbReference type="EMBL" id="AF324662">
    <property type="protein sequence ID" value="AAG40013.1"/>
    <property type="molecule type" value="mRNA"/>
</dbReference>
<dbReference type="EMBL" id="AF326906">
    <property type="protein sequence ID" value="AAG41488.1"/>
    <property type="molecule type" value="mRNA"/>
</dbReference>
<dbReference type="EMBL" id="AF339725">
    <property type="protein sequence ID" value="AAK00407.1"/>
    <property type="molecule type" value="mRNA"/>
</dbReference>
<dbReference type="EMBL" id="AF372915">
    <property type="protein sequence ID" value="AAK49631.1"/>
    <property type="molecule type" value="mRNA"/>
</dbReference>
<dbReference type="EMBL" id="AY086829">
    <property type="protein sequence ID" value="AAM63877.1"/>
    <property type="molecule type" value="mRNA"/>
</dbReference>
<dbReference type="PIR" id="T05674">
    <property type="entry name" value="T05674"/>
</dbReference>
<dbReference type="RefSeq" id="NP_195558.1">
    <property type="nucleotide sequence ID" value="NM_120007.4"/>
</dbReference>
<dbReference type="SMR" id="Q39108"/>
<dbReference type="BioGRID" id="15282">
    <property type="interactions" value="3"/>
</dbReference>
<dbReference type="FunCoup" id="Q39108">
    <property type="interactions" value="23"/>
</dbReference>
<dbReference type="IntAct" id="Q39108">
    <property type="interactions" value="1"/>
</dbReference>
<dbReference type="STRING" id="3702.Q39108"/>
<dbReference type="PaxDb" id="3702-AT4G38460.1"/>
<dbReference type="ProteomicsDB" id="224787"/>
<dbReference type="EnsemblPlants" id="AT4G38460.1">
    <property type="protein sequence ID" value="AT4G38460.1"/>
    <property type="gene ID" value="AT4G38460"/>
</dbReference>
<dbReference type="GeneID" id="830002"/>
<dbReference type="Gramene" id="AT4G38460.1">
    <property type="protein sequence ID" value="AT4G38460.1"/>
    <property type="gene ID" value="AT4G38460"/>
</dbReference>
<dbReference type="KEGG" id="ath:AT4G38460"/>
<dbReference type="Araport" id="AT4G38460"/>
<dbReference type="TAIR" id="AT4G38460">
    <property type="gene designation" value="GGR"/>
</dbReference>
<dbReference type="eggNOG" id="KOG0776">
    <property type="taxonomic scope" value="Eukaryota"/>
</dbReference>
<dbReference type="HOGENOM" id="CLU_014015_0_0_1"/>
<dbReference type="InParanoid" id="Q39108"/>
<dbReference type="OMA" id="PVMCISA"/>
<dbReference type="PhylomeDB" id="Q39108"/>
<dbReference type="PRO" id="PR:Q39108"/>
<dbReference type="Proteomes" id="UP000006548">
    <property type="component" value="Chromosome 4"/>
</dbReference>
<dbReference type="ExpressionAtlas" id="Q39108">
    <property type="expression patterns" value="baseline and differential"/>
</dbReference>
<dbReference type="GO" id="GO:0009507">
    <property type="term" value="C:chloroplast"/>
    <property type="evidence" value="ECO:0000314"/>
    <property type="project" value="TAIR"/>
</dbReference>
<dbReference type="GO" id="GO:0009535">
    <property type="term" value="C:chloroplast thylakoid membrane"/>
    <property type="evidence" value="ECO:0007669"/>
    <property type="project" value="UniProtKB-SubCell"/>
</dbReference>
<dbReference type="GO" id="GO:0042651">
    <property type="term" value="C:thylakoid membrane"/>
    <property type="evidence" value="ECO:0000314"/>
    <property type="project" value="TAIR"/>
</dbReference>
<dbReference type="GO" id="GO:0046872">
    <property type="term" value="F:metal ion binding"/>
    <property type="evidence" value="ECO:0007669"/>
    <property type="project" value="UniProtKB-KW"/>
</dbReference>
<dbReference type="GO" id="GO:0004659">
    <property type="term" value="F:prenyltransferase activity"/>
    <property type="evidence" value="ECO:0007669"/>
    <property type="project" value="InterPro"/>
</dbReference>
<dbReference type="GO" id="GO:0043693">
    <property type="term" value="P:monoterpene biosynthetic process"/>
    <property type="evidence" value="ECO:0000315"/>
    <property type="project" value="TAIR"/>
</dbReference>
<dbReference type="CDD" id="cd00685">
    <property type="entry name" value="Trans_IPPS_HT"/>
    <property type="match status" value="1"/>
</dbReference>
<dbReference type="FunFam" id="1.10.600.10:FF:000001">
    <property type="entry name" value="Geranylgeranyl diphosphate synthase"/>
    <property type="match status" value="1"/>
</dbReference>
<dbReference type="Gene3D" id="1.10.600.10">
    <property type="entry name" value="Farnesyl Diphosphate Synthase"/>
    <property type="match status" value="1"/>
</dbReference>
<dbReference type="InterPro" id="IPR008949">
    <property type="entry name" value="Isoprenoid_synthase_dom_sf"/>
</dbReference>
<dbReference type="InterPro" id="IPR000092">
    <property type="entry name" value="Polyprenyl_synt"/>
</dbReference>
<dbReference type="InterPro" id="IPR033749">
    <property type="entry name" value="Polyprenyl_synt_CS"/>
</dbReference>
<dbReference type="PANTHER" id="PTHR43281">
    <property type="entry name" value="FARNESYL DIPHOSPHATE SYNTHASE"/>
    <property type="match status" value="1"/>
</dbReference>
<dbReference type="PANTHER" id="PTHR43281:SF5">
    <property type="entry name" value="HETERODIMERIC GERANYLGERANYL PYROPHOSPHATE SYNTHASE SMALL SUBUNIT, CHLOROPLASTIC"/>
    <property type="match status" value="1"/>
</dbReference>
<dbReference type="Pfam" id="PF00348">
    <property type="entry name" value="polyprenyl_synt"/>
    <property type="match status" value="1"/>
</dbReference>
<dbReference type="SFLD" id="SFLDS00005">
    <property type="entry name" value="Isoprenoid_Synthase_Type_I"/>
    <property type="match status" value="1"/>
</dbReference>
<dbReference type="SUPFAM" id="SSF48576">
    <property type="entry name" value="Terpenoid synthases"/>
    <property type="match status" value="1"/>
</dbReference>
<dbReference type="PROSITE" id="PS00723">
    <property type="entry name" value="POLYPRENYL_SYNTHASE_1"/>
    <property type="match status" value="1"/>
</dbReference>
<sequence length="326" mass="35189">MLFSGSAIPLSSFCSLPEKPHTLPMKLSPAAIRSSSSSAPGSLNFDLRTYWTTLITEINQKLDEAIPVKHPAGIYEAMRYSVLAQGAKRAPPVMCVAACELFGGDRLAAFPTACALEMVHAASLIHDDLPCMDDDPVRRGKPSNHTVYGSGMAILAGDALFPLAFQHIVSHTPPDLVPRATILRLITEIARTVGSTGMAAGQYVDLEGGPFPLSFVQEKKFGAMGECSAVCGGLLGGATEDELQSLRRYGRAVGMLYQVVDDITEDKKKSYDGGAEKGMMEMAEELKEKAKKELQVFDNKYGGGDTLVPLYTFVDYAAHRHFLLPL</sequence>
<gene>
    <name type="primary">GGR</name>
    <name type="ordered locus">At4g38460</name>
    <name type="ORF">F20M13.20</name>
</gene>
<organism>
    <name type="scientific">Arabidopsis thaliana</name>
    <name type="common">Mouse-ear cress</name>
    <dbReference type="NCBI Taxonomy" id="3702"/>
    <lineage>
        <taxon>Eukaryota</taxon>
        <taxon>Viridiplantae</taxon>
        <taxon>Streptophyta</taxon>
        <taxon>Embryophyta</taxon>
        <taxon>Tracheophyta</taxon>
        <taxon>Spermatophyta</taxon>
        <taxon>Magnoliopsida</taxon>
        <taxon>eudicotyledons</taxon>
        <taxon>Gunneridae</taxon>
        <taxon>Pentapetalae</taxon>
        <taxon>rosids</taxon>
        <taxon>malvids</taxon>
        <taxon>Brassicales</taxon>
        <taxon>Brassicaceae</taxon>
        <taxon>Camelineae</taxon>
        <taxon>Arabidopsis</taxon>
    </lineage>
</organism>
<proteinExistence type="evidence at protein level"/>
<feature type="transit peptide" description="Chloroplast" evidence="4">
    <location>
        <begin position="1"/>
        <end position="33"/>
    </location>
</feature>
<feature type="chain" id="PRO_0000045406" description="Heterodimeric geranylgeranyl pyrophosphate synthase small subunit, chloroplastic">
    <location>
        <begin position="34"/>
        <end position="326"/>
    </location>
</feature>
<feature type="coiled-coil region" evidence="4">
    <location>
        <begin position="274"/>
        <end position="301"/>
    </location>
</feature>
<feature type="binding site" evidence="2">
    <location>
        <position position="88"/>
    </location>
    <ligand>
        <name>isopentenyl diphosphate</name>
        <dbReference type="ChEBI" id="CHEBI:128769"/>
    </ligand>
</feature>
<feature type="binding site" evidence="3">
    <location>
        <position position="120"/>
    </location>
    <ligand>
        <name>isopentenyl diphosphate</name>
        <dbReference type="ChEBI" id="CHEBI:128769"/>
    </ligand>
</feature>
<feature type="binding site" evidence="2">
    <location>
        <position position="127"/>
    </location>
    <ligand>
        <name>Mg(2+)</name>
        <dbReference type="ChEBI" id="CHEBI:18420"/>
        <label>1</label>
    </ligand>
</feature>
<feature type="binding site" evidence="2">
    <location>
        <position position="127"/>
    </location>
    <ligand>
        <name>Mg(2+)</name>
        <dbReference type="ChEBI" id="CHEBI:18420"/>
        <label>2</label>
    </ligand>
</feature>
<feature type="binding site" evidence="2">
    <location>
        <position position="133"/>
    </location>
    <ligand>
        <name>Mg(2+)</name>
        <dbReference type="ChEBI" id="CHEBI:18420"/>
        <label>1</label>
    </ligand>
</feature>
<feature type="binding site" evidence="2">
    <location>
        <position position="133"/>
    </location>
    <ligand>
        <name>Mg(2+)</name>
        <dbReference type="ChEBI" id="CHEBI:18420"/>
        <label>2</label>
    </ligand>
</feature>
<feature type="binding site" evidence="1">
    <location>
        <position position="138"/>
    </location>
    <ligand>
        <name>dimethylallyl diphosphate</name>
        <dbReference type="ChEBI" id="CHEBI:57623"/>
    </ligand>
</feature>
<feature type="binding site" evidence="2">
    <location>
        <position position="139"/>
    </location>
    <ligand>
        <name>isopentenyl diphosphate</name>
        <dbReference type="ChEBI" id="CHEBI:128769"/>
    </ligand>
</feature>
<feature type="binding site" evidence="1">
    <location>
        <position position="220"/>
    </location>
    <ligand>
        <name>dimethylallyl diphosphate</name>
        <dbReference type="ChEBI" id="CHEBI:57623"/>
    </ligand>
</feature>
<feature type="binding site" evidence="1">
    <location>
        <position position="258"/>
    </location>
    <ligand>
        <name>dimethylallyl diphosphate</name>
        <dbReference type="ChEBI" id="CHEBI:57623"/>
    </ligand>
</feature>
<feature type="sequence conflict" description="In Ref. 1; AAA81879." evidence="8" ref="1">
    <original>A</original>
    <variation>P</variation>
    <location>
        <position position="84"/>
    </location>
</feature>
<feature type="sequence conflict" description="In Ref. 1; AAA81879." evidence="8" ref="1">
    <original>A</original>
    <variation>P</variation>
    <location>
        <position position="87"/>
    </location>
</feature>
<feature type="sequence conflict" description="In Ref. 4; AAG40013." evidence="8" ref="4">
    <original>A</original>
    <variation>E</variation>
    <location>
        <position position="317"/>
    </location>
</feature>
<reference key="1">
    <citation type="online journal article" date="1995" name="Plant Gene Register">
        <title>Nucleotide sequence of a putative geranylgeranyl pyrophosphate synthase from Arabidopsis.</title>
        <authorList>
            <person name="Scolnik P.A."/>
            <person name="Bartley G.E."/>
        </authorList>
        <locator>PGR95-018</locator>
    </citation>
    <scope>NUCLEOTIDE SEQUENCE [MRNA]</scope>
    <source>
        <strain>cv. Columbia</strain>
    </source>
</reference>
<reference key="2">
    <citation type="journal article" date="1999" name="Nature">
        <title>Sequence and analysis of chromosome 4 of the plant Arabidopsis thaliana.</title>
        <authorList>
            <person name="Mayer K.F.X."/>
            <person name="Schueller C."/>
            <person name="Wambutt R."/>
            <person name="Murphy G."/>
            <person name="Volckaert G."/>
            <person name="Pohl T."/>
            <person name="Duesterhoeft A."/>
            <person name="Stiekema W."/>
            <person name="Entian K.-D."/>
            <person name="Terryn N."/>
            <person name="Harris B."/>
            <person name="Ansorge W."/>
            <person name="Brandt P."/>
            <person name="Grivell L.A."/>
            <person name="Rieger M."/>
            <person name="Weichselgartner M."/>
            <person name="de Simone V."/>
            <person name="Obermaier B."/>
            <person name="Mache R."/>
            <person name="Mueller M."/>
            <person name="Kreis M."/>
            <person name="Delseny M."/>
            <person name="Puigdomenech P."/>
            <person name="Watson M."/>
            <person name="Schmidtheini T."/>
            <person name="Reichert B."/>
            <person name="Portetelle D."/>
            <person name="Perez-Alonso M."/>
            <person name="Boutry M."/>
            <person name="Bancroft I."/>
            <person name="Vos P."/>
            <person name="Hoheisel J."/>
            <person name="Zimmermann W."/>
            <person name="Wedler H."/>
            <person name="Ridley P."/>
            <person name="Langham S.-A."/>
            <person name="McCullagh B."/>
            <person name="Bilham L."/>
            <person name="Robben J."/>
            <person name="van der Schueren J."/>
            <person name="Grymonprez B."/>
            <person name="Chuang Y.-J."/>
            <person name="Vandenbussche F."/>
            <person name="Braeken M."/>
            <person name="Weltjens I."/>
            <person name="Voet M."/>
            <person name="Bastiaens I."/>
            <person name="Aert R."/>
            <person name="Defoor E."/>
            <person name="Weitzenegger T."/>
            <person name="Bothe G."/>
            <person name="Ramsperger U."/>
            <person name="Hilbert H."/>
            <person name="Braun M."/>
            <person name="Holzer E."/>
            <person name="Brandt A."/>
            <person name="Peters S."/>
            <person name="van Staveren M."/>
            <person name="Dirkse W."/>
            <person name="Mooijman P."/>
            <person name="Klein Lankhorst R."/>
            <person name="Rose M."/>
            <person name="Hauf J."/>
            <person name="Koetter P."/>
            <person name="Berneiser S."/>
            <person name="Hempel S."/>
            <person name="Feldpausch M."/>
            <person name="Lamberth S."/>
            <person name="Van den Daele H."/>
            <person name="De Keyser A."/>
            <person name="Buysshaert C."/>
            <person name="Gielen J."/>
            <person name="Villarroel R."/>
            <person name="De Clercq R."/>
            <person name="van Montagu M."/>
            <person name="Rogers J."/>
            <person name="Cronin A."/>
            <person name="Quail M.A."/>
            <person name="Bray-Allen S."/>
            <person name="Clark L."/>
            <person name="Doggett J."/>
            <person name="Hall S."/>
            <person name="Kay M."/>
            <person name="Lennard N."/>
            <person name="McLay K."/>
            <person name="Mayes R."/>
            <person name="Pettett A."/>
            <person name="Rajandream M.A."/>
            <person name="Lyne M."/>
            <person name="Benes V."/>
            <person name="Rechmann S."/>
            <person name="Borkova D."/>
            <person name="Bloecker H."/>
            <person name="Scharfe M."/>
            <person name="Grimm M."/>
            <person name="Loehnert T.-H."/>
            <person name="Dose S."/>
            <person name="de Haan M."/>
            <person name="Maarse A.C."/>
            <person name="Schaefer M."/>
            <person name="Mueller-Auer S."/>
            <person name="Gabel C."/>
            <person name="Fuchs M."/>
            <person name="Fartmann B."/>
            <person name="Granderath K."/>
            <person name="Dauner D."/>
            <person name="Herzl A."/>
            <person name="Neumann S."/>
            <person name="Argiriou A."/>
            <person name="Vitale D."/>
            <person name="Liguori R."/>
            <person name="Piravandi E."/>
            <person name="Massenet O."/>
            <person name="Quigley F."/>
            <person name="Clabauld G."/>
            <person name="Muendlein A."/>
            <person name="Felber R."/>
            <person name="Schnabl S."/>
            <person name="Hiller R."/>
            <person name="Schmidt W."/>
            <person name="Lecharny A."/>
            <person name="Aubourg S."/>
            <person name="Chefdor F."/>
            <person name="Cooke R."/>
            <person name="Berger C."/>
            <person name="Monfort A."/>
            <person name="Casacuberta E."/>
            <person name="Gibbons T."/>
            <person name="Weber N."/>
            <person name="Vandenbol M."/>
            <person name="Bargues M."/>
            <person name="Terol J."/>
            <person name="Torres A."/>
            <person name="Perez-Perez A."/>
            <person name="Purnelle B."/>
            <person name="Bent E."/>
            <person name="Johnson S."/>
            <person name="Tacon D."/>
            <person name="Jesse T."/>
            <person name="Heijnen L."/>
            <person name="Schwarz S."/>
            <person name="Scholler P."/>
            <person name="Heber S."/>
            <person name="Francs P."/>
            <person name="Bielke C."/>
            <person name="Frishman D."/>
            <person name="Haase D."/>
            <person name="Lemcke K."/>
            <person name="Mewes H.-W."/>
            <person name="Stocker S."/>
            <person name="Zaccaria P."/>
            <person name="Bevan M."/>
            <person name="Wilson R.K."/>
            <person name="de la Bastide M."/>
            <person name="Habermann K."/>
            <person name="Parnell L."/>
            <person name="Dedhia N."/>
            <person name="Gnoj L."/>
            <person name="Schutz K."/>
            <person name="Huang E."/>
            <person name="Spiegel L."/>
            <person name="Sekhon M."/>
            <person name="Murray J."/>
            <person name="Sheet P."/>
            <person name="Cordes M."/>
            <person name="Abu-Threideh J."/>
            <person name="Stoneking T."/>
            <person name="Kalicki J."/>
            <person name="Graves T."/>
            <person name="Harmon G."/>
            <person name="Edwards J."/>
            <person name="Latreille P."/>
            <person name="Courtney L."/>
            <person name="Cloud J."/>
            <person name="Abbott A."/>
            <person name="Scott K."/>
            <person name="Johnson D."/>
            <person name="Minx P."/>
            <person name="Bentley D."/>
            <person name="Fulton B."/>
            <person name="Miller N."/>
            <person name="Greco T."/>
            <person name="Kemp K."/>
            <person name="Kramer J."/>
            <person name="Fulton L."/>
            <person name="Mardis E."/>
            <person name="Dante M."/>
            <person name="Pepin K."/>
            <person name="Hillier L.W."/>
            <person name="Nelson J."/>
            <person name="Spieth J."/>
            <person name="Ryan E."/>
            <person name="Andrews S."/>
            <person name="Geisel C."/>
            <person name="Layman D."/>
            <person name="Du H."/>
            <person name="Ali J."/>
            <person name="Berghoff A."/>
            <person name="Jones K."/>
            <person name="Drone K."/>
            <person name="Cotton M."/>
            <person name="Joshu C."/>
            <person name="Antonoiu B."/>
            <person name="Zidanic M."/>
            <person name="Strong C."/>
            <person name="Sun H."/>
            <person name="Lamar B."/>
            <person name="Yordan C."/>
            <person name="Ma P."/>
            <person name="Zhong J."/>
            <person name="Preston R."/>
            <person name="Vil D."/>
            <person name="Shekher M."/>
            <person name="Matero A."/>
            <person name="Shah R."/>
            <person name="Swaby I.K."/>
            <person name="O'Shaughnessy A."/>
            <person name="Rodriguez M."/>
            <person name="Hoffman J."/>
            <person name="Till S."/>
            <person name="Granat S."/>
            <person name="Shohdy N."/>
            <person name="Hasegawa A."/>
            <person name="Hameed A."/>
            <person name="Lodhi M."/>
            <person name="Johnson A."/>
            <person name="Chen E."/>
            <person name="Marra M.A."/>
            <person name="Martienssen R."/>
            <person name="McCombie W.R."/>
        </authorList>
    </citation>
    <scope>NUCLEOTIDE SEQUENCE [LARGE SCALE GENOMIC DNA]</scope>
    <source>
        <strain>cv. Columbia</strain>
    </source>
</reference>
<reference key="3">
    <citation type="journal article" date="2017" name="Plant J.">
        <title>Araport11: a complete reannotation of the Arabidopsis thaliana reference genome.</title>
        <authorList>
            <person name="Cheng C.Y."/>
            <person name="Krishnakumar V."/>
            <person name="Chan A.P."/>
            <person name="Thibaud-Nissen F."/>
            <person name="Schobel S."/>
            <person name="Town C.D."/>
        </authorList>
    </citation>
    <scope>GENOME REANNOTATION</scope>
    <source>
        <strain>cv. Columbia</strain>
    </source>
</reference>
<reference key="4">
    <citation type="journal article" date="2003" name="Science">
        <title>Empirical analysis of transcriptional activity in the Arabidopsis genome.</title>
        <authorList>
            <person name="Yamada K."/>
            <person name="Lim J."/>
            <person name="Dale J.M."/>
            <person name="Chen H."/>
            <person name="Shinn P."/>
            <person name="Palm C.J."/>
            <person name="Southwick A.M."/>
            <person name="Wu H.C."/>
            <person name="Kim C.J."/>
            <person name="Nguyen M."/>
            <person name="Pham P.K."/>
            <person name="Cheuk R.F."/>
            <person name="Karlin-Newmann G."/>
            <person name="Liu S.X."/>
            <person name="Lam B."/>
            <person name="Sakano H."/>
            <person name="Wu T."/>
            <person name="Yu G."/>
            <person name="Miranda M."/>
            <person name="Quach H.L."/>
            <person name="Tripp M."/>
            <person name="Chang C.H."/>
            <person name="Lee J.M."/>
            <person name="Toriumi M.J."/>
            <person name="Chan M.M."/>
            <person name="Tang C.C."/>
            <person name="Onodera C.S."/>
            <person name="Deng J.M."/>
            <person name="Akiyama K."/>
            <person name="Ansari Y."/>
            <person name="Arakawa T."/>
            <person name="Banh J."/>
            <person name="Banno F."/>
            <person name="Bowser L."/>
            <person name="Brooks S.Y."/>
            <person name="Carninci P."/>
            <person name="Chao Q."/>
            <person name="Choy N."/>
            <person name="Enju A."/>
            <person name="Goldsmith A.D."/>
            <person name="Gurjal M."/>
            <person name="Hansen N.F."/>
            <person name="Hayashizaki Y."/>
            <person name="Johnson-Hopson C."/>
            <person name="Hsuan V.W."/>
            <person name="Iida K."/>
            <person name="Karnes M."/>
            <person name="Khan S."/>
            <person name="Koesema E."/>
            <person name="Ishida J."/>
            <person name="Jiang P.X."/>
            <person name="Jones T."/>
            <person name="Kawai J."/>
            <person name="Kamiya A."/>
            <person name="Meyers C."/>
            <person name="Nakajima M."/>
            <person name="Narusaka M."/>
            <person name="Seki M."/>
            <person name="Sakurai T."/>
            <person name="Satou M."/>
            <person name="Tamse R."/>
            <person name="Vaysberg M."/>
            <person name="Wallender E.K."/>
            <person name="Wong C."/>
            <person name="Yamamura Y."/>
            <person name="Yuan S."/>
            <person name="Shinozaki K."/>
            <person name="Davis R.W."/>
            <person name="Theologis A."/>
            <person name="Ecker J.R."/>
        </authorList>
    </citation>
    <scope>NUCLEOTIDE SEQUENCE [LARGE SCALE MRNA]</scope>
    <source>
        <strain>cv. Columbia</strain>
    </source>
</reference>
<reference key="5">
    <citation type="submission" date="2002-03" db="EMBL/GenBank/DDBJ databases">
        <title>Full-length cDNA from Arabidopsis thaliana.</title>
        <authorList>
            <person name="Brover V.V."/>
            <person name="Troukhan M.E."/>
            <person name="Alexandrov N.A."/>
            <person name="Lu Y.-P."/>
            <person name="Flavell R.B."/>
            <person name="Feldmann K.A."/>
        </authorList>
    </citation>
    <scope>NUCLEOTIDE SEQUENCE [LARGE SCALE MRNA]</scope>
</reference>
<reference key="6">
    <citation type="journal article" date="2000" name="Plant Physiol.">
        <title>Five geranylgeranyl diphosphate synthases expressed in different organs are localized into three subcellular compartments in Arabidopsis.</title>
        <authorList>
            <person name="Okada K."/>
            <person name="Saito T."/>
            <person name="Nakagawa T."/>
            <person name="Kawamukai M."/>
            <person name="Kamiya Y."/>
        </authorList>
    </citation>
    <scope>TISSUE SPECIFICITY</scope>
</reference>
<reference key="7">
    <citation type="journal article" date="2009" name="Proc. Natl. Acad. Sci. U.S.A.">
        <title>Heterodimeric geranyl(geranyl)diphosphate synthase from hop (Humulus lupulus) and the evolution of monoterpene biosynthesis.</title>
        <authorList>
            <person name="Wang G."/>
            <person name="Dixon R.A."/>
        </authorList>
    </citation>
    <scope>FUNCTION</scope>
    <scope>SUBUNIT</scope>
    <scope>INTERACTION WITH GGPPS1; GGPPS2 AND GGPPS9</scope>
</reference>
<reference key="8">
    <citation type="journal article" date="2010" name="Proc. Natl. Acad. Sci. U.S.A.">
        <title>LIL3, a light-harvesting-like protein, plays an essential role in chlorophyll and tocopherol biosynthesis.</title>
        <authorList>
            <person name="Tanaka R."/>
            <person name="Rothbart M."/>
            <person name="Oka S."/>
            <person name="Takabayashi A."/>
            <person name="Takahashi K."/>
            <person name="Shibata M."/>
            <person name="Myouga F."/>
            <person name="Motohashi R."/>
            <person name="Shinozaki K."/>
            <person name="Grimm B."/>
            <person name="Tanaka A."/>
        </authorList>
    </citation>
    <scope>INTERACTION WITH LIL3.1 AND LIL3.2</scope>
</reference>
<name>GGR_ARATH</name>
<keyword id="KW-0150">Chloroplast</keyword>
<keyword id="KW-0175">Coiled coil</keyword>
<keyword id="KW-0460">Magnesium</keyword>
<keyword id="KW-0472">Membrane</keyword>
<keyword id="KW-0479">Metal-binding</keyword>
<keyword id="KW-0934">Plastid</keyword>
<keyword id="KW-1185">Reference proteome</keyword>
<keyword id="KW-0793">Thylakoid</keyword>
<keyword id="KW-0809">Transit peptide</keyword>
<accession>Q39108</accession>
<accession>Q9FPK0</accession>
<accession>Q9SZM6</accession>
<comment type="function">
    <text evidence="6">Heterodimeric geranyl(geranyl)-diphosphate (GPP) synthase small subunit. The small subunit alone is inactive in vitro while the large subunit GGPPS1 catalyzes mainly the production of geranygeranyl-diphosphate in vitro. Upon association of the two subunits, the product profile changes and the production of gerany-diphosphate is strongly increased.</text>
</comment>
<comment type="cofactor">
    <cofactor evidence="1">
        <name>Mg(2+)</name>
        <dbReference type="ChEBI" id="CHEBI:18420"/>
    </cofactor>
    <text evidence="1">Binds 2 Mg(2+) ions per subunit.</text>
</comment>
<comment type="subunit">
    <text evidence="6 7">Part of a heterodimeric geranyl(geranyl)diphosphate synthase. Interacts with GGPPS1 or GGPPS2, but not with GGPPS9 (PubMed:19482937). Interacts with LIL3.1 and LIL3.2 (PubMed:20823244).</text>
</comment>
<comment type="subcellular location">
    <subcellularLocation>
        <location evidence="8">Plastid</location>
        <location evidence="8">Chloroplast thylakoid membrane</location>
        <topology evidence="8">Peripheral membrane protein</topology>
    </subcellularLocation>
</comment>
<comment type="tissue specificity">
    <text evidence="5">Expressed ubiquitously.</text>
</comment>
<comment type="similarity">
    <text evidence="8">Belongs to the FPP/GGPP synthase family.</text>
</comment>